<dbReference type="EC" id="6.3.5.2" evidence="1"/>
<dbReference type="EMBL" id="CP000029">
    <property type="protein sequence ID" value="AAW53469.1"/>
    <property type="molecule type" value="Genomic_DNA"/>
</dbReference>
<dbReference type="RefSeq" id="WP_002468031.1">
    <property type="nucleotide sequence ID" value="NC_002976.3"/>
</dbReference>
<dbReference type="SMR" id="Q5HRX1"/>
<dbReference type="STRING" id="176279.SERP0070"/>
<dbReference type="MEROPS" id="C26.957"/>
<dbReference type="KEGG" id="ser:SERP0070"/>
<dbReference type="eggNOG" id="COG0518">
    <property type="taxonomic scope" value="Bacteria"/>
</dbReference>
<dbReference type="eggNOG" id="COG0519">
    <property type="taxonomic scope" value="Bacteria"/>
</dbReference>
<dbReference type="HOGENOM" id="CLU_014340_0_5_9"/>
<dbReference type="UniPathway" id="UPA00189">
    <property type="reaction ID" value="UER00296"/>
</dbReference>
<dbReference type="Proteomes" id="UP000000531">
    <property type="component" value="Chromosome"/>
</dbReference>
<dbReference type="GO" id="GO:0005829">
    <property type="term" value="C:cytosol"/>
    <property type="evidence" value="ECO:0007669"/>
    <property type="project" value="TreeGrafter"/>
</dbReference>
<dbReference type="GO" id="GO:0005524">
    <property type="term" value="F:ATP binding"/>
    <property type="evidence" value="ECO:0007669"/>
    <property type="project" value="UniProtKB-UniRule"/>
</dbReference>
<dbReference type="GO" id="GO:0003921">
    <property type="term" value="F:GMP synthase activity"/>
    <property type="evidence" value="ECO:0007669"/>
    <property type="project" value="InterPro"/>
</dbReference>
<dbReference type="CDD" id="cd01742">
    <property type="entry name" value="GATase1_GMP_Synthase"/>
    <property type="match status" value="1"/>
</dbReference>
<dbReference type="CDD" id="cd01997">
    <property type="entry name" value="GMP_synthase_C"/>
    <property type="match status" value="1"/>
</dbReference>
<dbReference type="FunFam" id="3.30.300.10:FF:000002">
    <property type="entry name" value="GMP synthase [glutamine-hydrolyzing]"/>
    <property type="match status" value="1"/>
</dbReference>
<dbReference type="FunFam" id="3.40.50.620:FF:000001">
    <property type="entry name" value="GMP synthase [glutamine-hydrolyzing]"/>
    <property type="match status" value="1"/>
</dbReference>
<dbReference type="FunFam" id="3.40.50.880:FF:000001">
    <property type="entry name" value="GMP synthase [glutamine-hydrolyzing]"/>
    <property type="match status" value="1"/>
</dbReference>
<dbReference type="Gene3D" id="3.30.300.10">
    <property type="match status" value="1"/>
</dbReference>
<dbReference type="Gene3D" id="3.40.50.880">
    <property type="match status" value="1"/>
</dbReference>
<dbReference type="Gene3D" id="3.40.50.620">
    <property type="entry name" value="HUPs"/>
    <property type="match status" value="1"/>
</dbReference>
<dbReference type="HAMAP" id="MF_00344">
    <property type="entry name" value="GMP_synthase"/>
    <property type="match status" value="1"/>
</dbReference>
<dbReference type="InterPro" id="IPR029062">
    <property type="entry name" value="Class_I_gatase-like"/>
</dbReference>
<dbReference type="InterPro" id="IPR017926">
    <property type="entry name" value="GATASE"/>
</dbReference>
<dbReference type="InterPro" id="IPR001674">
    <property type="entry name" value="GMP_synth_C"/>
</dbReference>
<dbReference type="InterPro" id="IPR004739">
    <property type="entry name" value="GMP_synth_GATase"/>
</dbReference>
<dbReference type="InterPro" id="IPR022955">
    <property type="entry name" value="GMP_synthase"/>
</dbReference>
<dbReference type="InterPro" id="IPR025777">
    <property type="entry name" value="GMPS_ATP_PPase_dom"/>
</dbReference>
<dbReference type="InterPro" id="IPR014729">
    <property type="entry name" value="Rossmann-like_a/b/a_fold"/>
</dbReference>
<dbReference type="NCBIfam" id="TIGR00884">
    <property type="entry name" value="guaA_Cterm"/>
    <property type="match status" value="1"/>
</dbReference>
<dbReference type="NCBIfam" id="TIGR00888">
    <property type="entry name" value="guaA_Nterm"/>
    <property type="match status" value="1"/>
</dbReference>
<dbReference type="NCBIfam" id="NF000848">
    <property type="entry name" value="PRK00074.1"/>
    <property type="match status" value="1"/>
</dbReference>
<dbReference type="PANTHER" id="PTHR11922:SF2">
    <property type="entry name" value="GMP SYNTHASE [GLUTAMINE-HYDROLYZING]"/>
    <property type="match status" value="1"/>
</dbReference>
<dbReference type="PANTHER" id="PTHR11922">
    <property type="entry name" value="GMP SYNTHASE-RELATED"/>
    <property type="match status" value="1"/>
</dbReference>
<dbReference type="Pfam" id="PF00117">
    <property type="entry name" value="GATase"/>
    <property type="match status" value="1"/>
</dbReference>
<dbReference type="Pfam" id="PF00958">
    <property type="entry name" value="GMP_synt_C"/>
    <property type="match status" value="1"/>
</dbReference>
<dbReference type="Pfam" id="PF03054">
    <property type="entry name" value="tRNA_Me_trans"/>
    <property type="match status" value="1"/>
</dbReference>
<dbReference type="PRINTS" id="PR00097">
    <property type="entry name" value="ANTSNTHASEII"/>
</dbReference>
<dbReference type="PRINTS" id="PR00099">
    <property type="entry name" value="CPSGATASE"/>
</dbReference>
<dbReference type="PRINTS" id="PR00096">
    <property type="entry name" value="GATASE"/>
</dbReference>
<dbReference type="SUPFAM" id="SSF52402">
    <property type="entry name" value="Adenine nucleotide alpha hydrolases-like"/>
    <property type="match status" value="1"/>
</dbReference>
<dbReference type="SUPFAM" id="SSF52317">
    <property type="entry name" value="Class I glutamine amidotransferase-like"/>
    <property type="match status" value="1"/>
</dbReference>
<dbReference type="SUPFAM" id="SSF54810">
    <property type="entry name" value="GMP synthetase C-terminal dimerisation domain"/>
    <property type="match status" value="1"/>
</dbReference>
<dbReference type="PROSITE" id="PS51273">
    <property type="entry name" value="GATASE_TYPE_1"/>
    <property type="match status" value="1"/>
</dbReference>
<dbReference type="PROSITE" id="PS51553">
    <property type="entry name" value="GMPS_ATP_PPASE"/>
    <property type="match status" value="1"/>
</dbReference>
<comment type="function">
    <text evidence="1">Catalyzes the synthesis of GMP from XMP.</text>
</comment>
<comment type="catalytic activity">
    <reaction evidence="1">
        <text>XMP + L-glutamine + ATP + H2O = GMP + L-glutamate + AMP + diphosphate + 2 H(+)</text>
        <dbReference type="Rhea" id="RHEA:11680"/>
        <dbReference type="ChEBI" id="CHEBI:15377"/>
        <dbReference type="ChEBI" id="CHEBI:15378"/>
        <dbReference type="ChEBI" id="CHEBI:29985"/>
        <dbReference type="ChEBI" id="CHEBI:30616"/>
        <dbReference type="ChEBI" id="CHEBI:33019"/>
        <dbReference type="ChEBI" id="CHEBI:57464"/>
        <dbReference type="ChEBI" id="CHEBI:58115"/>
        <dbReference type="ChEBI" id="CHEBI:58359"/>
        <dbReference type="ChEBI" id="CHEBI:456215"/>
        <dbReference type="EC" id="6.3.5.2"/>
    </reaction>
</comment>
<comment type="pathway">
    <text evidence="1">Purine metabolism; GMP biosynthesis; GMP from XMP (L-Gln route): step 1/1.</text>
</comment>
<comment type="subunit">
    <text evidence="1">Homodimer.</text>
</comment>
<sequence length="513" mass="58171">MEMAKEQELILVLDFGSQYNQLITRRIREMGVYSELHDHEISIEEIKRMNPKGIILSGGPNSVYEEGSFTIDPEIYNLGIPVLGICYGMQLTTKLLGGKVERANEREYGKATINAKSDELFFGLPSEQTVWMSHSDKVIEIPEGFEVIADSPSTNYAAIEDKKRRIYGVQFHPEVRHTEYGNDLLRNFVRRVCNCTGEWTMENFIEIEIEKIRQQVGNRKVLCAMSGGVDSSVVAVLLHKAIGDQLTCIFVDHGLLRKGEGDMVMEQFGEGFDMNIIRVNAQERFMSKLKGVSDPERKRKIIGNEFVYVFDDEAAKLTDVDFLAQGTLYTDVIESGTKTAQTIKSHHNVGGLPEDMEFELIEPINTLFKDEVRALGIELGIPEHLVWRQPFPGPGLGIRVLGEITEDKLEIVRESDAILREVIREEGLERDIWQYFTVLPGIQSVGVMGDYRTYDHTVGIRAVTSIDGMTSDFARIDWEVLQKISSRIVNEVDHVNRVVYDITSKPPSTIEWE</sequence>
<evidence type="ECO:0000255" key="1">
    <source>
        <dbReference type="HAMAP-Rule" id="MF_00344"/>
    </source>
</evidence>
<protein>
    <recommendedName>
        <fullName evidence="1">GMP synthase [glutamine-hydrolyzing]</fullName>
        <ecNumber evidence="1">6.3.5.2</ecNumber>
    </recommendedName>
    <alternativeName>
        <fullName evidence="1">GMP synthetase</fullName>
    </alternativeName>
    <alternativeName>
        <fullName evidence="1">Glutamine amidotransferase</fullName>
    </alternativeName>
</protein>
<proteinExistence type="inferred from homology"/>
<organism>
    <name type="scientific">Staphylococcus epidermidis (strain ATCC 35984 / DSM 28319 / BCRC 17069 / CCUG 31568 / BM 3577 / RP62A)</name>
    <dbReference type="NCBI Taxonomy" id="176279"/>
    <lineage>
        <taxon>Bacteria</taxon>
        <taxon>Bacillati</taxon>
        <taxon>Bacillota</taxon>
        <taxon>Bacilli</taxon>
        <taxon>Bacillales</taxon>
        <taxon>Staphylococcaceae</taxon>
        <taxon>Staphylococcus</taxon>
    </lineage>
</organism>
<gene>
    <name evidence="1" type="primary">guaA</name>
    <name type="ordered locus">SERP0070</name>
</gene>
<reference key="1">
    <citation type="journal article" date="2005" name="J. Bacteriol.">
        <title>Insights on evolution of virulence and resistance from the complete genome analysis of an early methicillin-resistant Staphylococcus aureus strain and a biofilm-producing methicillin-resistant Staphylococcus epidermidis strain.</title>
        <authorList>
            <person name="Gill S.R."/>
            <person name="Fouts D.E."/>
            <person name="Archer G.L."/>
            <person name="Mongodin E.F."/>
            <person name="DeBoy R.T."/>
            <person name="Ravel J."/>
            <person name="Paulsen I.T."/>
            <person name="Kolonay J.F."/>
            <person name="Brinkac L.M."/>
            <person name="Beanan M.J."/>
            <person name="Dodson R.J."/>
            <person name="Daugherty S.C."/>
            <person name="Madupu R."/>
            <person name="Angiuoli S.V."/>
            <person name="Durkin A.S."/>
            <person name="Haft D.H."/>
            <person name="Vamathevan J.J."/>
            <person name="Khouri H."/>
            <person name="Utterback T.R."/>
            <person name="Lee C."/>
            <person name="Dimitrov G."/>
            <person name="Jiang L."/>
            <person name="Qin H."/>
            <person name="Weidman J."/>
            <person name="Tran K."/>
            <person name="Kang K.H."/>
            <person name="Hance I.R."/>
            <person name="Nelson K.E."/>
            <person name="Fraser C.M."/>
        </authorList>
    </citation>
    <scope>NUCLEOTIDE SEQUENCE [LARGE SCALE GENOMIC DNA]</scope>
    <source>
        <strain>ATCC 35984 / DSM 28319 / BCRC 17069 / CCUG 31568 / BM 3577 / RP62A</strain>
    </source>
</reference>
<accession>Q5HRX1</accession>
<feature type="chain" id="PRO_0000140182" description="GMP synthase [glutamine-hydrolyzing]">
    <location>
        <begin position="1"/>
        <end position="513"/>
    </location>
</feature>
<feature type="domain" description="Glutamine amidotransferase type-1" evidence="1">
    <location>
        <begin position="9"/>
        <end position="198"/>
    </location>
</feature>
<feature type="domain" description="GMPS ATP-PPase" evidence="1">
    <location>
        <begin position="199"/>
        <end position="388"/>
    </location>
</feature>
<feature type="active site" description="Nucleophile" evidence="1">
    <location>
        <position position="86"/>
    </location>
</feature>
<feature type="active site" evidence="1">
    <location>
        <position position="172"/>
    </location>
</feature>
<feature type="active site" evidence="1">
    <location>
        <position position="174"/>
    </location>
</feature>
<feature type="binding site" evidence="1">
    <location>
        <begin position="226"/>
        <end position="232"/>
    </location>
    <ligand>
        <name>ATP</name>
        <dbReference type="ChEBI" id="CHEBI:30616"/>
    </ligand>
</feature>
<name>GUAA_STAEQ</name>
<keyword id="KW-0067">ATP-binding</keyword>
<keyword id="KW-0315">Glutamine amidotransferase</keyword>
<keyword id="KW-0332">GMP biosynthesis</keyword>
<keyword id="KW-0436">Ligase</keyword>
<keyword id="KW-0547">Nucleotide-binding</keyword>
<keyword id="KW-0658">Purine biosynthesis</keyword>
<keyword id="KW-1185">Reference proteome</keyword>